<feature type="chain" id="PRO_1000140670" description="Small ribosomal subunit protein uS4">
    <location>
        <begin position="1"/>
        <end position="208"/>
    </location>
</feature>
<feature type="domain" description="S4 RNA-binding" evidence="1">
    <location>
        <begin position="98"/>
        <end position="160"/>
    </location>
</feature>
<feature type="region of interest" description="Disordered" evidence="2">
    <location>
        <begin position="24"/>
        <end position="52"/>
    </location>
</feature>
<gene>
    <name evidence="1" type="primary">rpsD</name>
    <name type="ordered locus">ACICU_03254</name>
</gene>
<organism>
    <name type="scientific">Acinetobacter baumannii (strain ACICU)</name>
    <dbReference type="NCBI Taxonomy" id="405416"/>
    <lineage>
        <taxon>Bacteria</taxon>
        <taxon>Pseudomonadati</taxon>
        <taxon>Pseudomonadota</taxon>
        <taxon>Gammaproteobacteria</taxon>
        <taxon>Moraxellales</taxon>
        <taxon>Moraxellaceae</taxon>
        <taxon>Acinetobacter</taxon>
        <taxon>Acinetobacter calcoaceticus/baumannii complex</taxon>
    </lineage>
</organism>
<keyword id="KW-0687">Ribonucleoprotein</keyword>
<keyword id="KW-0689">Ribosomal protein</keyword>
<keyword id="KW-0694">RNA-binding</keyword>
<keyword id="KW-0699">rRNA-binding</keyword>
<sequence>MARYIGPKCKLSRREGTDLQLKSGVKPFDVKTKKANKAPGQHGQARGGKQSEYSLQLREKQKVRRIYGVLERQFSNYYKEAARVKGATGENLLKLLESRLDNVVYRMGFGSTRAEARQLVSHRSITLNGRRVNIASIQVKSGDVIAVHEGAKQQLRIKNAIELAAQRGIPAWIEVDHSKLEGTFKAAPDRSDLPAEINESLIVELYSK</sequence>
<evidence type="ECO:0000255" key="1">
    <source>
        <dbReference type="HAMAP-Rule" id="MF_01306"/>
    </source>
</evidence>
<evidence type="ECO:0000256" key="2">
    <source>
        <dbReference type="SAM" id="MobiDB-lite"/>
    </source>
</evidence>
<evidence type="ECO:0000305" key="3"/>
<dbReference type="EMBL" id="CP000863">
    <property type="protein sequence ID" value="ACC58566.1"/>
    <property type="molecule type" value="Genomic_DNA"/>
</dbReference>
<dbReference type="RefSeq" id="WP_000135205.1">
    <property type="nucleotide sequence ID" value="NZ_CP031380.1"/>
</dbReference>
<dbReference type="SMR" id="B2HZ84"/>
<dbReference type="KEGG" id="abc:ACICU_03254"/>
<dbReference type="HOGENOM" id="CLU_092403_0_2_6"/>
<dbReference type="Proteomes" id="UP000008839">
    <property type="component" value="Chromosome"/>
</dbReference>
<dbReference type="GO" id="GO:0015935">
    <property type="term" value="C:small ribosomal subunit"/>
    <property type="evidence" value="ECO:0007669"/>
    <property type="project" value="InterPro"/>
</dbReference>
<dbReference type="GO" id="GO:0019843">
    <property type="term" value="F:rRNA binding"/>
    <property type="evidence" value="ECO:0007669"/>
    <property type="project" value="UniProtKB-UniRule"/>
</dbReference>
<dbReference type="GO" id="GO:0003735">
    <property type="term" value="F:structural constituent of ribosome"/>
    <property type="evidence" value="ECO:0007669"/>
    <property type="project" value="InterPro"/>
</dbReference>
<dbReference type="GO" id="GO:0042274">
    <property type="term" value="P:ribosomal small subunit biogenesis"/>
    <property type="evidence" value="ECO:0007669"/>
    <property type="project" value="TreeGrafter"/>
</dbReference>
<dbReference type="GO" id="GO:0006412">
    <property type="term" value="P:translation"/>
    <property type="evidence" value="ECO:0007669"/>
    <property type="project" value="UniProtKB-UniRule"/>
</dbReference>
<dbReference type="CDD" id="cd00165">
    <property type="entry name" value="S4"/>
    <property type="match status" value="1"/>
</dbReference>
<dbReference type="FunFam" id="1.10.1050.10:FF:000001">
    <property type="entry name" value="30S ribosomal protein S4"/>
    <property type="match status" value="1"/>
</dbReference>
<dbReference type="FunFam" id="3.10.290.10:FF:000001">
    <property type="entry name" value="30S ribosomal protein S4"/>
    <property type="match status" value="1"/>
</dbReference>
<dbReference type="Gene3D" id="1.10.1050.10">
    <property type="entry name" value="Ribosomal Protein S4 Delta 41, Chain A, domain 1"/>
    <property type="match status" value="1"/>
</dbReference>
<dbReference type="Gene3D" id="3.10.290.10">
    <property type="entry name" value="RNA-binding S4 domain"/>
    <property type="match status" value="1"/>
</dbReference>
<dbReference type="HAMAP" id="MF_01306_B">
    <property type="entry name" value="Ribosomal_uS4_B"/>
    <property type="match status" value="1"/>
</dbReference>
<dbReference type="InterPro" id="IPR022801">
    <property type="entry name" value="Ribosomal_uS4"/>
</dbReference>
<dbReference type="InterPro" id="IPR005709">
    <property type="entry name" value="Ribosomal_uS4_bac-type"/>
</dbReference>
<dbReference type="InterPro" id="IPR018079">
    <property type="entry name" value="Ribosomal_uS4_CS"/>
</dbReference>
<dbReference type="InterPro" id="IPR001912">
    <property type="entry name" value="Ribosomal_uS4_N"/>
</dbReference>
<dbReference type="InterPro" id="IPR002942">
    <property type="entry name" value="S4_RNA-bd"/>
</dbReference>
<dbReference type="InterPro" id="IPR036986">
    <property type="entry name" value="S4_RNA-bd_sf"/>
</dbReference>
<dbReference type="NCBIfam" id="NF003717">
    <property type="entry name" value="PRK05327.1"/>
    <property type="match status" value="1"/>
</dbReference>
<dbReference type="NCBIfam" id="TIGR01017">
    <property type="entry name" value="rpsD_bact"/>
    <property type="match status" value="1"/>
</dbReference>
<dbReference type="PANTHER" id="PTHR11831">
    <property type="entry name" value="30S 40S RIBOSOMAL PROTEIN"/>
    <property type="match status" value="1"/>
</dbReference>
<dbReference type="PANTHER" id="PTHR11831:SF4">
    <property type="entry name" value="SMALL RIBOSOMAL SUBUNIT PROTEIN US4M"/>
    <property type="match status" value="1"/>
</dbReference>
<dbReference type="Pfam" id="PF00163">
    <property type="entry name" value="Ribosomal_S4"/>
    <property type="match status" value="1"/>
</dbReference>
<dbReference type="Pfam" id="PF01479">
    <property type="entry name" value="S4"/>
    <property type="match status" value="1"/>
</dbReference>
<dbReference type="SMART" id="SM01390">
    <property type="entry name" value="Ribosomal_S4"/>
    <property type="match status" value="1"/>
</dbReference>
<dbReference type="SMART" id="SM00363">
    <property type="entry name" value="S4"/>
    <property type="match status" value="1"/>
</dbReference>
<dbReference type="SUPFAM" id="SSF55174">
    <property type="entry name" value="Alpha-L RNA-binding motif"/>
    <property type="match status" value="1"/>
</dbReference>
<dbReference type="PROSITE" id="PS00632">
    <property type="entry name" value="RIBOSOMAL_S4"/>
    <property type="match status" value="1"/>
</dbReference>
<dbReference type="PROSITE" id="PS50889">
    <property type="entry name" value="S4"/>
    <property type="match status" value="1"/>
</dbReference>
<accession>B2HZ84</accession>
<protein>
    <recommendedName>
        <fullName evidence="1">Small ribosomal subunit protein uS4</fullName>
    </recommendedName>
    <alternativeName>
        <fullName evidence="3">30S ribosomal protein S4</fullName>
    </alternativeName>
</protein>
<reference key="1">
    <citation type="journal article" date="2008" name="Antimicrob. Agents Chemother.">
        <title>Whole-genome pyrosequencing of an epidemic multidrug-resistant Acinetobacter baumannii strain belonging to the European clone II group.</title>
        <authorList>
            <person name="Iacono M."/>
            <person name="Villa L."/>
            <person name="Fortini D."/>
            <person name="Bordoni R."/>
            <person name="Imperi F."/>
            <person name="Bonnal R.J."/>
            <person name="Sicheritz-Ponten T."/>
            <person name="De Bellis G."/>
            <person name="Visca P."/>
            <person name="Cassone A."/>
            <person name="Carattoli A."/>
        </authorList>
    </citation>
    <scope>NUCLEOTIDE SEQUENCE [LARGE SCALE GENOMIC DNA]</scope>
    <source>
        <strain>ACICU</strain>
    </source>
</reference>
<comment type="function">
    <text evidence="1">One of the primary rRNA binding proteins, it binds directly to 16S rRNA where it nucleates assembly of the body of the 30S subunit.</text>
</comment>
<comment type="function">
    <text evidence="1">With S5 and S12 plays an important role in translational accuracy.</text>
</comment>
<comment type="subunit">
    <text evidence="1">Part of the 30S ribosomal subunit. Contacts protein S5. The interaction surface between S4 and S5 is involved in control of translational fidelity.</text>
</comment>
<comment type="similarity">
    <text evidence="1">Belongs to the universal ribosomal protein uS4 family.</text>
</comment>
<name>RS4_ACIBC</name>
<proteinExistence type="inferred from homology"/>